<name>YQGF_PROM1</name>
<comment type="function">
    <text evidence="1">Could be a nuclease involved in processing of the 5'-end of pre-16S rRNA.</text>
</comment>
<comment type="subcellular location">
    <subcellularLocation>
        <location evidence="1">Cytoplasm</location>
    </subcellularLocation>
</comment>
<comment type="similarity">
    <text evidence="1">Belongs to the YqgF nuclease family.</text>
</comment>
<keyword id="KW-0963">Cytoplasm</keyword>
<keyword id="KW-0378">Hydrolase</keyword>
<keyword id="KW-0540">Nuclease</keyword>
<keyword id="KW-0690">Ribosome biogenesis</keyword>
<proteinExistence type="inferred from homology"/>
<feature type="chain" id="PRO_1000061551" description="Putative pre-16S rRNA nuclease">
    <location>
        <begin position="1"/>
        <end position="144"/>
    </location>
</feature>
<protein>
    <recommendedName>
        <fullName evidence="1">Putative pre-16S rRNA nuclease</fullName>
        <ecNumber evidence="1">3.1.-.-</ecNumber>
    </recommendedName>
</protein>
<reference key="1">
    <citation type="journal article" date="2007" name="PLoS Genet.">
        <title>Patterns and implications of gene gain and loss in the evolution of Prochlorococcus.</title>
        <authorList>
            <person name="Kettler G.C."/>
            <person name="Martiny A.C."/>
            <person name="Huang K."/>
            <person name="Zucker J."/>
            <person name="Coleman M.L."/>
            <person name="Rodrigue S."/>
            <person name="Chen F."/>
            <person name="Lapidus A."/>
            <person name="Ferriera S."/>
            <person name="Johnson J."/>
            <person name="Steglich C."/>
            <person name="Church G.M."/>
            <person name="Richardson P."/>
            <person name="Chisholm S.W."/>
        </authorList>
    </citation>
    <scope>NUCLEOTIDE SEQUENCE [LARGE SCALE GENOMIC DNA]</scope>
    <source>
        <strain>NATL1A</strain>
    </source>
</reference>
<sequence>MIQPKPCSVLSLDIGDKRIGIAGCDPLGISITHLPAIFRDSFEKDLKEFEKICFDRRVEGLICGNPLDMNGMETKQSIRCKKYGIKLAKCLKLPLAFINEHCSTLEAKEKFSLKNDKTGRLDSAAAAILLQQWLIEGPDLDDSN</sequence>
<evidence type="ECO:0000255" key="1">
    <source>
        <dbReference type="HAMAP-Rule" id="MF_00651"/>
    </source>
</evidence>
<organism>
    <name type="scientific">Prochlorococcus marinus (strain NATL1A)</name>
    <dbReference type="NCBI Taxonomy" id="167555"/>
    <lineage>
        <taxon>Bacteria</taxon>
        <taxon>Bacillati</taxon>
        <taxon>Cyanobacteriota</taxon>
        <taxon>Cyanophyceae</taxon>
        <taxon>Synechococcales</taxon>
        <taxon>Prochlorococcaceae</taxon>
        <taxon>Prochlorococcus</taxon>
    </lineage>
</organism>
<accession>A2C1M9</accession>
<dbReference type="EC" id="3.1.-.-" evidence="1"/>
<dbReference type="EMBL" id="CP000553">
    <property type="protein sequence ID" value="ABM75389.1"/>
    <property type="molecule type" value="Genomic_DNA"/>
</dbReference>
<dbReference type="RefSeq" id="WP_011823535.1">
    <property type="nucleotide sequence ID" value="NC_008819.1"/>
</dbReference>
<dbReference type="SMR" id="A2C1M9"/>
<dbReference type="KEGG" id="pme:NATL1_08311"/>
<dbReference type="eggNOG" id="COG0816">
    <property type="taxonomic scope" value="Bacteria"/>
</dbReference>
<dbReference type="HOGENOM" id="CLU_098240_3_1_3"/>
<dbReference type="Proteomes" id="UP000002592">
    <property type="component" value="Chromosome"/>
</dbReference>
<dbReference type="GO" id="GO:0005829">
    <property type="term" value="C:cytosol"/>
    <property type="evidence" value="ECO:0007669"/>
    <property type="project" value="TreeGrafter"/>
</dbReference>
<dbReference type="GO" id="GO:0004518">
    <property type="term" value="F:nuclease activity"/>
    <property type="evidence" value="ECO:0007669"/>
    <property type="project" value="UniProtKB-KW"/>
</dbReference>
<dbReference type="GO" id="GO:0000967">
    <property type="term" value="P:rRNA 5'-end processing"/>
    <property type="evidence" value="ECO:0007669"/>
    <property type="project" value="UniProtKB-UniRule"/>
</dbReference>
<dbReference type="CDD" id="cd16964">
    <property type="entry name" value="YqgF"/>
    <property type="match status" value="1"/>
</dbReference>
<dbReference type="Gene3D" id="3.30.420.140">
    <property type="entry name" value="YqgF/RNase H-like domain"/>
    <property type="match status" value="1"/>
</dbReference>
<dbReference type="HAMAP" id="MF_00651">
    <property type="entry name" value="Nuclease_YqgF"/>
    <property type="match status" value="1"/>
</dbReference>
<dbReference type="InterPro" id="IPR012337">
    <property type="entry name" value="RNaseH-like_sf"/>
</dbReference>
<dbReference type="InterPro" id="IPR005227">
    <property type="entry name" value="YqgF"/>
</dbReference>
<dbReference type="InterPro" id="IPR006641">
    <property type="entry name" value="YqgF/RNaseH-like_dom"/>
</dbReference>
<dbReference type="InterPro" id="IPR037027">
    <property type="entry name" value="YqgF/RNaseH-like_dom_sf"/>
</dbReference>
<dbReference type="NCBIfam" id="TIGR00250">
    <property type="entry name" value="RNAse_H_YqgF"/>
    <property type="match status" value="1"/>
</dbReference>
<dbReference type="PANTHER" id="PTHR33317">
    <property type="entry name" value="POLYNUCLEOTIDYL TRANSFERASE, RIBONUCLEASE H-LIKE SUPERFAMILY PROTEIN"/>
    <property type="match status" value="1"/>
</dbReference>
<dbReference type="PANTHER" id="PTHR33317:SF4">
    <property type="entry name" value="POLYNUCLEOTIDYL TRANSFERASE, RIBONUCLEASE H-LIKE SUPERFAMILY PROTEIN"/>
    <property type="match status" value="1"/>
</dbReference>
<dbReference type="Pfam" id="PF03652">
    <property type="entry name" value="RuvX"/>
    <property type="match status" value="1"/>
</dbReference>
<dbReference type="SMART" id="SM00732">
    <property type="entry name" value="YqgFc"/>
    <property type="match status" value="1"/>
</dbReference>
<dbReference type="SUPFAM" id="SSF53098">
    <property type="entry name" value="Ribonuclease H-like"/>
    <property type="match status" value="1"/>
</dbReference>
<gene>
    <name type="ordered locus">NATL1_08311</name>
</gene>